<sequence length="466" mass="52074">MADQFYLENIDEFVTDQNKIVTYKWLSYTLGVHVNQAKQMLYDYVERKRKENSGAQLHVTYLVSGSLIQNGHSCHKVAVVREDKLEAVKSKLAVTASVHVYSIQKAMLKDSGPLFNTDYDILKSNLQNCSKFSAIQCAAAVPRAPAESSSSEKLEQSDPPVSPEMQASDELTTNGHGPPVPKQSSQQPKGIMGMFASKAASKAQDANKETKTEAKEVMNSEKNNENLLLSGYWESMIVLFQAQCINKLKVNLDSEQEVKEEKKVEQPPLSVTEPKLAAPVDLKKSSKKAEPVRMQQKEKKRRKQMELSDDETKETENMKKKRRRIKLPESDSSEDEVIPDSPGAYEAESPSPPPPSPSPEPVLKTEPEPPPVKGSDGENKRKRKRVLKSKTFTDEEGCMVTEKVYESESCTDSEEELKMKTSSVHRPPAMAVKKEPKEERKGPKKGTAAMGKANRQVAITGFFQRK</sequence>
<feature type="initiator methionine" description="Removed" evidence="1">
    <location>
        <position position="1"/>
    </location>
</feature>
<feature type="chain" id="PRO_0000228672" description="DNA polymerase delta subunit 3">
    <location>
        <begin position="2"/>
        <end position="466"/>
    </location>
</feature>
<feature type="region of interest" description="Disordered" evidence="3">
    <location>
        <begin position="145"/>
        <end position="218"/>
    </location>
</feature>
<feature type="region of interest" description="Disordered" evidence="3">
    <location>
        <begin position="255"/>
        <end position="466"/>
    </location>
</feature>
<feature type="short sequence motif" description="PIP-box" evidence="1">
    <location>
        <begin position="456"/>
        <end position="463"/>
    </location>
</feature>
<feature type="compositionally biased region" description="Basic and acidic residues" evidence="3">
    <location>
        <begin position="205"/>
        <end position="218"/>
    </location>
</feature>
<feature type="compositionally biased region" description="Basic and acidic residues" evidence="3">
    <location>
        <begin position="255"/>
        <end position="265"/>
    </location>
</feature>
<feature type="compositionally biased region" description="Basic and acidic residues" evidence="3">
    <location>
        <begin position="281"/>
        <end position="297"/>
    </location>
</feature>
<feature type="compositionally biased region" description="Pro residues" evidence="3">
    <location>
        <begin position="350"/>
        <end position="360"/>
    </location>
</feature>
<feature type="compositionally biased region" description="Basic and acidic residues" evidence="3">
    <location>
        <begin position="432"/>
        <end position="441"/>
    </location>
</feature>
<feature type="modified residue" description="N-acetylalanine" evidence="1">
    <location>
        <position position="2"/>
    </location>
</feature>
<feature type="modified residue" description="Phosphoserine" evidence="1">
    <location>
        <position position="308"/>
    </location>
</feature>
<feature type="modified residue" description="Phosphoserine" evidence="1">
    <location>
        <position position="407"/>
    </location>
</feature>
<feature type="modified residue" description="Phosphoserine" evidence="1">
    <location>
        <position position="409"/>
    </location>
</feature>
<feature type="modified residue" description="Phosphothreonine" evidence="1">
    <location>
        <position position="411"/>
    </location>
</feature>
<feature type="modified residue" description="Phosphoserine" evidence="1">
    <location>
        <position position="413"/>
    </location>
</feature>
<feature type="cross-link" description="Glycyl lysine isopeptide (Lys-Gly) (interchain with G-Cter in SUMO); alternate" evidence="1">
    <location>
        <position position="259"/>
    </location>
</feature>
<feature type="cross-link" description="Glycyl lysine isopeptide (Lys-Gly) (interchain with G-Cter in SUMO2); alternate" evidence="1">
    <location>
        <position position="259"/>
    </location>
</feature>
<feature type="cross-link" description="Glycyl lysine isopeptide (Lys-Gly) (interchain with G-Cter in SUMO2)" evidence="1">
    <location>
        <position position="262"/>
    </location>
</feature>
<feature type="cross-link" description="Glycyl lysine isopeptide (Lys-Gly) (interchain with G-Cter in SUMO); alternate" evidence="1">
    <location>
        <position position="433"/>
    </location>
</feature>
<feature type="cross-link" description="Glycyl lysine isopeptide (Lys-Gly) (interchain with G-Cter in SUMO2); alternate" evidence="1">
    <location>
        <position position="433"/>
    </location>
</feature>
<name>DPOD3_BOVIN</name>
<organism>
    <name type="scientific">Bos taurus</name>
    <name type="common">Bovine</name>
    <dbReference type="NCBI Taxonomy" id="9913"/>
    <lineage>
        <taxon>Eukaryota</taxon>
        <taxon>Metazoa</taxon>
        <taxon>Chordata</taxon>
        <taxon>Craniata</taxon>
        <taxon>Vertebrata</taxon>
        <taxon>Euteleostomi</taxon>
        <taxon>Mammalia</taxon>
        <taxon>Eutheria</taxon>
        <taxon>Laurasiatheria</taxon>
        <taxon>Artiodactyla</taxon>
        <taxon>Ruminantia</taxon>
        <taxon>Pecora</taxon>
        <taxon>Bovidae</taxon>
        <taxon>Bovinae</taxon>
        <taxon>Bos</taxon>
    </lineage>
</organism>
<gene>
    <name type="primary">POLD3</name>
</gene>
<dbReference type="SMR" id="P84798"/>
<dbReference type="CORUM" id="P84798"/>
<dbReference type="FunCoup" id="P84798">
    <property type="interactions" value="2324"/>
</dbReference>
<dbReference type="IntAct" id="P84798">
    <property type="interactions" value="1"/>
</dbReference>
<dbReference type="STRING" id="9913.ENSBTAP00000042403"/>
<dbReference type="PaxDb" id="9913-ENSBTAP00000042403"/>
<dbReference type="VEuPathDB" id="HostDB:ENSBTAG00000016869"/>
<dbReference type="eggNOG" id="ENOG502QPSW">
    <property type="taxonomic scope" value="Eukaryota"/>
</dbReference>
<dbReference type="InParanoid" id="P84798"/>
<dbReference type="Reactome" id="R-BTA-110314">
    <property type="pathway name" value="Recognition of DNA damage by PCNA-containing replication complex"/>
</dbReference>
<dbReference type="Reactome" id="R-BTA-174411">
    <property type="pathway name" value="Polymerase switching on the C-strand of the telomere"/>
</dbReference>
<dbReference type="Reactome" id="R-BTA-174414">
    <property type="pathway name" value="Processive synthesis on the C-strand of the telomere"/>
</dbReference>
<dbReference type="Reactome" id="R-BTA-174417">
    <property type="pathway name" value="Telomere C-strand (Lagging Strand) Synthesis"/>
</dbReference>
<dbReference type="Reactome" id="R-BTA-174437">
    <property type="pathway name" value="Removal of the Flap Intermediate from the C-strand"/>
</dbReference>
<dbReference type="Reactome" id="R-BTA-5358565">
    <property type="pathway name" value="Mismatch repair (MMR) directed by MSH2:MSH6 (MutSalpha)"/>
</dbReference>
<dbReference type="Reactome" id="R-BTA-5358606">
    <property type="pathway name" value="Mismatch repair (MMR) directed by MSH2:MSH3 (MutSbeta)"/>
</dbReference>
<dbReference type="Reactome" id="R-BTA-5651801">
    <property type="pathway name" value="PCNA-Dependent Long Patch Base Excision Repair"/>
</dbReference>
<dbReference type="Reactome" id="R-BTA-5656169">
    <property type="pathway name" value="Termination of translesion DNA synthesis"/>
</dbReference>
<dbReference type="Reactome" id="R-BTA-5685942">
    <property type="pathway name" value="HDR through Homologous Recombination (HRR)"/>
</dbReference>
<dbReference type="Reactome" id="R-BTA-5696397">
    <property type="pathway name" value="Gap-filling DNA repair synthesis and ligation in GG-NER"/>
</dbReference>
<dbReference type="Reactome" id="R-BTA-5696400">
    <property type="pathway name" value="Dual Incision in GG-NER"/>
</dbReference>
<dbReference type="Reactome" id="R-BTA-6782135">
    <property type="pathway name" value="Dual incision in TC-NER"/>
</dbReference>
<dbReference type="Reactome" id="R-BTA-6782210">
    <property type="pathway name" value="Gap-filling DNA repair synthesis and ligation in TC-NER"/>
</dbReference>
<dbReference type="Reactome" id="R-BTA-69091">
    <property type="pathway name" value="Polymerase switching"/>
</dbReference>
<dbReference type="Reactome" id="R-BTA-69166">
    <property type="pathway name" value="Removal of the Flap Intermediate"/>
</dbReference>
<dbReference type="Reactome" id="R-BTA-69183">
    <property type="pathway name" value="Processive synthesis on the lagging strand"/>
</dbReference>
<dbReference type="Proteomes" id="UP000009136">
    <property type="component" value="Chromosome 15"/>
</dbReference>
<dbReference type="Bgee" id="ENSBTAG00000016869">
    <property type="expression patterns" value="Expressed in spermatid and 105 other cell types or tissues"/>
</dbReference>
<dbReference type="GO" id="GO:0005737">
    <property type="term" value="C:cytoplasm"/>
    <property type="evidence" value="ECO:0007669"/>
    <property type="project" value="UniProtKB-SubCell"/>
</dbReference>
<dbReference type="GO" id="GO:0043625">
    <property type="term" value="C:delta DNA polymerase complex"/>
    <property type="evidence" value="ECO:0000314"/>
    <property type="project" value="UniProtKB"/>
</dbReference>
<dbReference type="GO" id="GO:0071897">
    <property type="term" value="P:DNA biosynthetic process"/>
    <property type="evidence" value="ECO:0000314"/>
    <property type="project" value="UniProtKB"/>
</dbReference>
<dbReference type="GO" id="GO:0006271">
    <property type="term" value="P:DNA strand elongation involved in DNA replication"/>
    <property type="evidence" value="ECO:0000318"/>
    <property type="project" value="GO_Central"/>
</dbReference>
<dbReference type="GO" id="GO:1904161">
    <property type="term" value="P:DNA synthesis involved in UV-damage excision repair"/>
    <property type="evidence" value="ECO:0000318"/>
    <property type="project" value="GO_Central"/>
</dbReference>
<dbReference type="GO" id="GO:0006297">
    <property type="term" value="P:nucleotide-excision repair, DNA gap filling"/>
    <property type="evidence" value="ECO:0000318"/>
    <property type="project" value="GO_Central"/>
</dbReference>
<dbReference type="FunFam" id="3.90.1030.20:FF:000001">
    <property type="entry name" value="DNA polymerase delta 3, accessory subunit"/>
    <property type="match status" value="1"/>
</dbReference>
<dbReference type="Gene3D" id="3.90.1030.20">
    <property type="entry name" value="DNA polymerase delta, p66 (Cdc27) subunit, wHTH domain"/>
    <property type="match status" value="1"/>
</dbReference>
<dbReference type="InterPro" id="IPR019038">
    <property type="entry name" value="POLD3"/>
</dbReference>
<dbReference type="InterPro" id="IPR041913">
    <property type="entry name" value="POLD3_sf"/>
</dbReference>
<dbReference type="PANTHER" id="PTHR17598">
    <property type="entry name" value="DNA POLYMERASE DELTA SUBUNIT 3"/>
    <property type="match status" value="1"/>
</dbReference>
<dbReference type="PANTHER" id="PTHR17598:SF13">
    <property type="entry name" value="DNA POLYMERASE DELTA SUBUNIT 3"/>
    <property type="match status" value="1"/>
</dbReference>
<dbReference type="Pfam" id="PF09507">
    <property type="entry name" value="CDC27"/>
    <property type="match status" value="1"/>
</dbReference>
<evidence type="ECO:0000250" key="1">
    <source>
        <dbReference type="UniProtKB" id="Q15054"/>
    </source>
</evidence>
<evidence type="ECO:0000250" key="2">
    <source>
        <dbReference type="UniProtKB" id="Q9EQ28"/>
    </source>
</evidence>
<evidence type="ECO:0000256" key="3">
    <source>
        <dbReference type="SAM" id="MobiDB-lite"/>
    </source>
</evidence>
<evidence type="ECO:0000269" key="4">
    <source>
    </source>
</evidence>
<evidence type="ECO:0000305" key="5"/>
<keyword id="KW-0007">Acetylation</keyword>
<keyword id="KW-0963">Cytoplasm</keyword>
<keyword id="KW-0903">Direct protein sequencing</keyword>
<keyword id="KW-0227">DNA damage</keyword>
<keyword id="KW-0228">DNA excision</keyword>
<keyword id="KW-0234">DNA repair</keyword>
<keyword id="KW-0235">DNA replication</keyword>
<keyword id="KW-1017">Isopeptide bond</keyword>
<keyword id="KW-0539">Nucleus</keyword>
<keyword id="KW-0597">Phosphoprotein</keyword>
<keyword id="KW-1185">Reference proteome</keyword>
<keyword id="KW-0832">Ubl conjugation</keyword>
<reference key="1">
    <citation type="journal article" date="2009" name="Science">
        <title>The genome sequence of taurine cattle: a window to ruminant biology and evolution.</title>
        <authorList>
            <consortium name="The bovine genome sequencing and analysis consortium"/>
        </authorList>
    </citation>
    <scope>NUCLEOTIDE SEQUENCE [LARGE SCALE GENOMIC DNA]</scope>
    <source>
        <strain>Hereford</strain>
    </source>
</reference>
<reference evidence="5" key="2">
    <citation type="journal article" date="2000" name="J. Biol. Chem.">
        <title>Identification of a fourth subunit of mammalian DNA polymerase delta.</title>
        <authorList>
            <person name="Liu L."/>
            <person name="Mo J.-Y."/>
            <person name="Rodriguez-Belmonte E.M."/>
            <person name="Lee M.Y.W.T."/>
        </authorList>
    </citation>
    <scope>PROTEIN SEQUENCE OF 25-47; 77-89; 110-123; 132-143 AND 190-198</scope>
    <scope>IDENTIFICATION IN POL-DELTA COMPLEX</scope>
    <scope>MASS SPECTROMETRY</scope>
    <source>
        <tissue evidence="4">Thymus</tissue>
    </source>
</reference>
<proteinExistence type="evidence at protein level"/>
<comment type="function">
    <text evidence="1">Accessory component of both the DNA polymerase delta complex and the DNA polymerase zeta complex. As a component of the trimeric and tetrameric DNA polymerase delta complexes (Pol-delta3 and Pol-delta4, respectively), plays a role in high fidelity genome replication, including in lagging strand synthesis, and repair. Required for optimal Pol-delta activity. Stabilizes the Pol-delta complex and plays a major role in Pol-delta stimulation by PCNA. Pol-delta3 and Pol-delta4 are characterized by the absence or the presence of POLD4. They exhibit differences in catalytic activity. Most notably, Pol-delta3 shows higher proofreading activity than Pol-delta4. Although both Pol-delta3 and Pol-delta4 process Okazaki fragments in vitro, Pol-delta3 may also be better suited to fulfill this task, exhibiting near-absence of strand displacement activity compared to Pol-delta4 and stalling on encounter with the 5'-blocking oligonucleotides. Pol-delta3 idling process may avoid the formation of a gap, while maintaining a nick that can be readily ligated. Along with DNA polymerase kappa, DNA polymerase delta carries out approximately half of nucleotide excision repair (NER) synthesis following UV irradiation. In this context, POLD3, along with PCNA and RFC1-replication factor C complex, is required to recruit POLD1, the catalytic subunit of the polymerase delta complex, to DNA damage sites. Under conditions of DNA replication stress, required for the repair of broken replication forks through break-induced replication (BIR). Involved in the translesion synthesis (TLS) of templates carrying O6-methylguanine or abasic sites performed by Pol-delta4, independently of DNA polymerase zeta (REV3L) or eta (POLH). Facilitates abasic site bypass by DNA polymerase delta by promoting extension from the nucleotide inserted opposite the lesion. Also involved in TLS, as a component of the tetrameric DNA polymerase zeta complex. Along with POLD2, dramatically increases the efficiency and processivity of DNA synthesis of the DNA polymerase zeta complex compared to the minimal zeta complex, consisting of only REV3L and REV7.</text>
</comment>
<comment type="subunit">
    <text evidence="1">Component of both the DNA polymerase delta and DNA polymerase zeta complexes. The tetrameric DNA polymerase delta complex (Pol-delta4), which consists of POLD1/p125, POLD2/p50, POLD3/p66/p68 and POLD4/p12, with POLD1 bearing DNA polymerase and 3' to 5' proofreading exonuclease activities. Within this complex, directly interacts with POLD2. Following stress caused by DNA damaging agents or by replication stress, POLD4 is degraded and Pol-delta4 is converted into a trimeric form of the complex (Pol-delta3), which consists of POLD1, POLD2 and POLD3. Pol-delta3 is the major form occurring at S phase replication sites, as well as DNA damage sites. Directly interacts with PCNA, as do POLD1 and POLD4; this interaction stimulates Pol-delta polymerase activity. Component of the DNA polymerase zeta complex (POLZ), which consists of REV3L, MAD2L2, POLD2 and POLD3, with REV3L bearing DNA polymerase catalytic activity. The DNA polymerase delta complex interacts with POLDIP2; this interaction is probably mediated through direct binding to POLD2.</text>
</comment>
<comment type="subcellular location">
    <subcellularLocation>
        <location evidence="2">Cytoplasm</location>
    </subcellularLocation>
    <subcellularLocation>
        <location evidence="2">Nucleus</location>
    </subcellularLocation>
    <text evidence="1">Partially colocalizes with PCNA and POLD1 at S phase replication sites. Recruited to DNA damage sites within 2 hours following UV irradiation.</text>
</comment>
<comment type="domain">
    <text evidence="1">The PIP-box mediates the interaction with PCNA.</text>
</comment>
<comment type="PTM">
    <text evidence="1">Ubiquitinated, but not targeted to the proteasome. Sumoylated. Sumoylation by SUMO3 may be predominant.</text>
</comment>
<accession>P84798</accession>
<protein>
    <recommendedName>
        <fullName>DNA polymerase delta subunit 3</fullName>
    </recommendedName>
    <alternativeName>
        <fullName>DNA polymerase delta subunit p66</fullName>
    </alternativeName>
    <alternativeName>
        <fullName>p68</fullName>
    </alternativeName>
</protein>